<accession>B2TZB5</accession>
<proteinExistence type="inferred from homology"/>
<sequence>MRVVILGSGVVGVASAWYLNQAGHEVTVIDREPGAALETSAANAGQISPGYAAPWAAPGVPLKAIKWMFQRHAPLAVRLDGTQFQLKWMWQMLRNCDTSHYMENKGRMVRLAEYSRDCLKALRAETNIQYEGRQGGTLQLFRTEQQYENATRDIVVLEDAGVPYQLLESSRLAEVEPALAEVAHKLTGGLQLPNDETGDCQLFTQNLARMAEQAGVKFRFNTPVDQLLCDGEQIYGVKCGDEVIKADAYVMAFGSYSTAMLKGIVDIPVYPLKGYSLTIPIAQEDGAPVSTILDETYKIAITRFDNRIRVGGMAEIVGFNTELLQPRRETLEMVVRDLYPRGGHVEQATFWTGLRPMTPDGTPVVGRTRFKNLWLNTGHGTLGWTMACGSGQLLSDLLSGRTPAIPYEDLSVARYSRGFTPSRPGHLHGAHS</sequence>
<feature type="chain" id="PRO_1000138670" description="D-amino acid dehydrogenase">
    <location>
        <begin position="1"/>
        <end position="432"/>
    </location>
</feature>
<feature type="binding site" evidence="1">
    <location>
        <begin position="3"/>
        <end position="17"/>
    </location>
    <ligand>
        <name>FAD</name>
        <dbReference type="ChEBI" id="CHEBI:57692"/>
    </ligand>
</feature>
<keyword id="KW-0274">FAD</keyword>
<keyword id="KW-0285">Flavoprotein</keyword>
<keyword id="KW-0560">Oxidoreductase</keyword>
<keyword id="KW-1185">Reference proteome</keyword>
<dbReference type="EC" id="1.4.99.-" evidence="1"/>
<dbReference type="EMBL" id="CP001063">
    <property type="protein sequence ID" value="ACD08960.1"/>
    <property type="molecule type" value="Genomic_DNA"/>
</dbReference>
<dbReference type="RefSeq" id="WP_001266917.1">
    <property type="nucleotide sequence ID" value="NC_010658.1"/>
</dbReference>
<dbReference type="SMR" id="B2TZB5"/>
<dbReference type="STRING" id="344609.SbBS512_E1347"/>
<dbReference type="KEGG" id="sbc:SbBS512_E1347"/>
<dbReference type="HOGENOM" id="CLU_007884_9_2_6"/>
<dbReference type="UniPathway" id="UPA00043">
    <property type="reaction ID" value="UER00498"/>
</dbReference>
<dbReference type="Proteomes" id="UP000001030">
    <property type="component" value="Chromosome"/>
</dbReference>
<dbReference type="GO" id="GO:0005737">
    <property type="term" value="C:cytoplasm"/>
    <property type="evidence" value="ECO:0007669"/>
    <property type="project" value="TreeGrafter"/>
</dbReference>
<dbReference type="GO" id="GO:0005886">
    <property type="term" value="C:plasma membrane"/>
    <property type="evidence" value="ECO:0007669"/>
    <property type="project" value="TreeGrafter"/>
</dbReference>
<dbReference type="GO" id="GO:0008718">
    <property type="term" value="F:D-amino-acid dehydrogenase activity"/>
    <property type="evidence" value="ECO:0007669"/>
    <property type="project" value="UniProtKB-UniRule"/>
</dbReference>
<dbReference type="GO" id="GO:0055130">
    <property type="term" value="P:D-alanine catabolic process"/>
    <property type="evidence" value="ECO:0007669"/>
    <property type="project" value="UniProtKB-UniPathway"/>
</dbReference>
<dbReference type="FunFam" id="3.50.50.60:FF:000020">
    <property type="entry name" value="D-amino acid dehydrogenase"/>
    <property type="match status" value="1"/>
</dbReference>
<dbReference type="Gene3D" id="3.30.9.10">
    <property type="entry name" value="D-Amino Acid Oxidase, subunit A, domain 2"/>
    <property type="match status" value="1"/>
</dbReference>
<dbReference type="Gene3D" id="3.50.50.60">
    <property type="entry name" value="FAD/NAD(P)-binding domain"/>
    <property type="match status" value="2"/>
</dbReference>
<dbReference type="HAMAP" id="MF_01202">
    <property type="entry name" value="DadA"/>
    <property type="match status" value="1"/>
</dbReference>
<dbReference type="InterPro" id="IPR023080">
    <property type="entry name" value="DadA"/>
</dbReference>
<dbReference type="InterPro" id="IPR006076">
    <property type="entry name" value="FAD-dep_OxRdtase"/>
</dbReference>
<dbReference type="InterPro" id="IPR036188">
    <property type="entry name" value="FAD/NAD-bd_sf"/>
</dbReference>
<dbReference type="NCBIfam" id="NF001933">
    <property type="entry name" value="PRK00711.1"/>
    <property type="match status" value="1"/>
</dbReference>
<dbReference type="PANTHER" id="PTHR13847:SF280">
    <property type="entry name" value="D-AMINO ACID DEHYDROGENASE"/>
    <property type="match status" value="1"/>
</dbReference>
<dbReference type="PANTHER" id="PTHR13847">
    <property type="entry name" value="SARCOSINE DEHYDROGENASE-RELATED"/>
    <property type="match status" value="1"/>
</dbReference>
<dbReference type="Pfam" id="PF01266">
    <property type="entry name" value="DAO"/>
    <property type="match status" value="1"/>
</dbReference>
<dbReference type="SUPFAM" id="SSF54373">
    <property type="entry name" value="FAD-linked reductases, C-terminal domain"/>
    <property type="match status" value="1"/>
</dbReference>
<dbReference type="SUPFAM" id="SSF51905">
    <property type="entry name" value="FAD/NAD(P)-binding domain"/>
    <property type="match status" value="1"/>
</dbReference>
<protein>
    <recommendedName>
        <fullName evidence="1">D-amino acid dehydrogenase</fullName>
        <ecNumber evidence="1">1.4.99.-</ecNumber>
    </recommendedName>
</protein>
<evidence type="ECO:0000255" key="1">
    <source>
        <dbReference type="HAMAP-Rule" id="MF_01202"/>
    </source>
</evidence>
<gene>
    <name evidence="1" type="primary">dadA</name>
    <name type="ordered locus">SbBS512_E1347</name>
</gene>
<reference key="1">
    <citation type="submission" date="2008-05" db="EMBL/GenBank/DDBJ databases">
        <title>Complete sequence of Shigella boydii serotype 18 strain BS512.</title>
        <authorList>
            <person name="Rasko D.A."/>
            <person name="Rosovitz M."/>
            <person name="Maurelli A.T."/>
            <person name="Myers G."/>
            <person name="Seshadri R."/>
            <person name="Cer R."/>
            <person name="Jiang L."/>
            <person name="Ravel J."/>
            <person name="Sebastian Y."/>
        </authorList>
    </citation>
    <scope>NUCLEOTIDE SEQUENCE [LARGE SCALE GENOMIC DNA]</scope>
    <source>
        <strain>CDC 3083-94 / BS512</strain>
    </source>
</reference>
<comment type="function">
    <text evidence="1">Oxidative deamination of D-amino acids.</text>
</comment>
<comment type="catalytic activity">
    <reaction evidence="1">
        <text>a D-alpha-amino acid + A + H2O = a 2-oxocarboxylate + AH2 + NH4(+)</text>
        <dbReference type="Rhea" id="RHEA:18125"/>
        <dbReference type="ChEBI" id="CHEBI:13193"/>
        <dbReference type="ChEBI" id="CHEBI:15377"/>
        <dbReference type="ChEBI" id="CHEBI:17499"/>
        <dbReference type="ChEBI" id="CHEBI:28938"/>
        <dbReference type="ChEBI" id="CHEBI:35179"/>
        <dbReference type="ChEBI" id="CHEBI:59871"/>
    </reaction>
</comment>
<comment type="cofactor">
    <cofactor evidence="1">
        <name>FAD</name>
        <dbReference type="ChEBI" id="CHEBI:57692"/>
    </cofactor>
</comment>
<comment type="pathway">
    <text>Amino-acid degradation; D-alanine degradation; NH(3) and pyruvate from D-alanine: step 1/1.</text>
</comment>
<comment type="similarity">
    <text evidence="1">Belongs to the DadA oxidoreductase family.</text>
</comment>
<organism>
    <name type="scientific">Shigella boydii serotype 18 (strain CDC 3083-94 / BS512)</name>
    <dbReference type="NCBI Taxonomy" id="344609"/>
    <lineage>
        <taxon>Bacteria</taxon>
        <taxon>Pseudomonadati</taxon>
        <taxon>Pseudomonadota</taxon>
        <taxon>Gammaproteobacteria</taxon>
        <taxon>Enterobacterales</taxon>
        <taxon>Enterobacteriaceae</taxon>
        <taxon>Shigella</taxon>
    </lineage>
</organism>
<name>DADA_SHIB3</name>